<sequence length="164" mass="17777">MNIVDQQTFRDAMSCMGAAVNIITTDGPAGRAGFTASAVCSVTDTPPTLLVCLNRGASVWPVFNENRTLCVNTLSAGQEPLSNLFGGKTPMEHRFAAARWQTGVTGCPQLEEALVSFDCRISQVVSVGTHDILFCAIEAIHRHTTPYGLVWFDRSYHALMRPAC</sequence>
<protein>
    <recommendedName>
        <fullName evidence="1">FMN reductase (NADH) RutF</fullName>
        <ecNumber evidence="1">1.5.1.42</ecNumber>
    </recommendedName>
    <alternativeName>
        <fullName evidence="1">FMN reductase</fullName>
    </alternativeName>
    <alternativeName>
        <fullName evidence="1">NADH-flavin reductase RutF</fullName>
    </alternativeName>
    <alternativeName>
        <fullName evidence="1">NADH:flavin oxidoreductase</fullName>
    </alternativeName>
</protein>
<gene>
    <name evidence="1" type="primary">rutF</name>
    <name type="ordered locus">SFV_1019</name>
</gene>
<evidence type="ECO:0000255" key="1">
    <source>
        <dbReference type="HAMAP-Rule" id="MF_00833"/>
    </source>
</evidence>
<reference key="1">
    <citation type="journal article" date="2006" name="BMC Genomics">
        <title>Complete genome sequence of Shigella flexneri 5b and comparison with Shigella flexneri 2a.</title>
        <authorList>
            <person name="Nie H."/>
            <person name="Yang F."/>
            <person name="Zhang X."/>
            <person name="Yang J."/>
            <person name="Chen L."/>
            <person name="Wang J."/>
            <person name="Xiong Z."/>
            <person name="Peng J."/>
            <person name="Sun L."/>
            <person name="Dong J."/>
            <person name="Xue Y."/>
            <person name="Xu X."/>
            <person name="Chen S."/>
            <person name="Yao Z."/>
            <person name="Shen Y."/>
            <person name="Jin Q."/>
        </authorList>
    </citation>
    <scope>NUCLEOTIDE SEQUENCE [LARGE SCALE GENOMIC DNA]</scope>
    <source>
        <strain>8401</strain>
    </source>
</reference>
<comment type="function">
    <text evidence="1">Catalyzes the reduction of FMN to FMNH2 which is used to reduce pyrimidine by RutA via the Rut pathway.</text>
</comment>
<comment type="catalytic activity">
    <reaction evidence="1">
        <text>FMNH2 + NAD(+) = FMN + NADH + 2 H(+)</text>
        <dbReference type="Rhea" id="RHEA:21620"/>
        <dbReference type="ChEBI" id="CHEBI:15378"/>
        <dbReference type="ChEBI" id="CHEBI:57540"/>
        <dbReference type="ChEBI" id="CHEBI:57618"/>
        <dbReference type="ChEBI" id="CHEBI:57945"/>
        <dbReference type="ChEBI" id="CHEBI:58210"/>
        <dbReference type="EC" id="1.5.1.42"/>
    </reaction>
</comment>
<comment type="induction">
    <text evidence="1">Up-regulated by the nitrogen regulatory protein C (NtrC also called GlnG) and repressed by RutR.</text>
</comment>
<comment type="similarity">
    <text evidence="1">Belongs to the non-flavoprotein flavin reductase family. RutF subfamily.</text>
</comment>
<name>RUTF_SHIF8</name>
<accession>Q0T627</accession>
<keyword id="KW-0285">Flavoprotein</keyword>
<keyword id="KW-0288">FMN</keyword>
<keyword id="KW-0520">NAD</keyword>
<keyword id="KW-0560">Oxidoreductase</keyword>
<organism>
    <name type="scientific">Shigella flexneri serotype 5b (strain 8401)</name>
    <dbReference type="NCBI Taxonomy" id="373384"/>
    <lineage>
        <taxon>Bacteria</taxon>
        <taxon>Pseudomonadati</taxon>
        <taxon>Pseudomonadota</taxon>
        <taxon>Gammaproteobacteria</taxon>
        <taxon>Enterobacterales</taxon>
        <taxon>Enterobacteriaceae</taxon>
        <taxon>Shigella</taxon>
    </lineage>
</organism>
<dbReference type="EC" id="1.5.1.42" evidence="1"/>
<dbReference type="EMBL" id="CP000266">
    <property type="protein sequence ID" value="ABF03238.1"/>
    <property type="molecule type" value="Genomic_DNA"/>
</dbReference>
<dbReference type="RefSeq" id="WP_001028096.1">
    <property type="nucleotide sequence ID" value="NC_008258.1"/>
</dbReference>
<dbReference type="SMR" id="Q0T627"/>
<dbReference type="KEGG" id="sfv:SFV_1019"/>
<dbReference type="HOGENOM" id="CLU_059021_2_2_6"/>
<dbReference type="Proteomes" id="UP000000659">
    <property type="component" value="Chromosome"/>
</dbReference>
<dbReference type="GO" id="GO:0010181">
    <property type="term" value="F:FMN binding"/>
    <property type="evidence" value="ECO:0007669"/>
    <property type="project" value="InterPro"/>
</dbReference>
<dbReference type="GO" id="GO:0052874">
    <property type="term" value="F:FMN reductase (NADH) activity"/>
    <property type="evidence" value="ECO:0007669"/>
    <property type="project" value="UniProtKB-EC"/>
</dbReference>
<dbReference type="GO" id="GO:0008752">
    <property type="term" value="F:FMN reductase [NAD(P)H] activity"/>
    <property type="evidence" value="ECO:0007669"/>
    <property type="project" value="InterPro"/>
</dbReference>
<dbReference type="GO" id="GO:0042602">
    <property type="term" value="F:riboflavin reductase (NADPH) activity"/>
    <property type="evidence" value="ECO:0007669"/>
    <property type="project" value="UniProtKB-UniRule"/>
</dbReference>
<dbReference type="GO" id="GO:0019740">
    <property type="term" value="P:nitrogen utilization"/>
    <property type="evidence" value="ECO:0007669"/>
    <property type="project" value="UniProtKB-UniRule"/>
</dbReference>
<dbReference type="GO" id="GO:0006212">
    <property type="term" value="P:uracil catabolic process"/>
    <property type="evidence" value="ECO:0007669"/>
    <property type="project" value="UniProtKB-UniRule"/>
</dbReference>
<dbReference type="FunFam" id="2.30.110.10:FF:000002">
    <property type="entry name" value="FMN reductase (NADH) RutF"/>
    <property type="match status" value="1"/>
</dbReference>
<dbReference type="Gene3D" id="2.30.110.10">
    <property type="entry name" value="Electron Transport, Fmn-binding Protein, Chain A"/>
    <property type="match status" value="1"/>
</dbReference>
<dbReference type="HAMAP" id="MF_00833">
    <property type="entry name" value="RutF"/>
    <property type="match status" value="1"/>
</dbReference>
<dbReference type="InterPro" id="IPR002563">
    <property type="entry name" value="Flavin_Rdtase-like_dom"/>
</dbReference>
<dbReference type="InterPro" id="IPR050268">
    <property type="entry name" value="NADH-dep_flavin_reductase"/>
</dbReference>
<dbReference type="InterPro" id="IPR019917">
    <property type="entry name" value="RutF"/>
</dbReference>
<dbReference type="InterPro" id="IPR012349">
    <property type="entry name" value="Split_barrel_FMN-bd"/>
</dbReference>
<dbReference type="NCBIfam" id="TIGR03615">
    <property type="entry name" value="RutF"/>
    <property type="match status" value="1"/>
</dbReference>
<dbReference type="PANTHER" id="PTHR30466">
    <property type="entry name" value="FLAVIN REDUCTASE"/>
    <property type="match status" value="1"/>
</dbReference>
<dbReference type="PANTHER" id="PTHR30466:SF1">
    <property type="entry name" value="FMN REDUCTASE (NADH) RUTF"/>
    <property type="match status" value="1"/>
</dbReference>
<dbReference type="Pfam" id="PF01613">
    <property type="entry name" value="Flavin_Reduct"/>
    <property type="match status" value="1"/>
</dbReference>
<dbReference type="SMART" id="SM00903">
    <property type="entry name" value="Flavin_Reduct"/>
    <property type="match status" value="1"/>
</dbReference>
<dbReference type="SUPFAM" id="SSF50475">
    <property type="entry name" value="FMN-binding split barrel"/>
    <property type="match status" value="1"/>
</dbReference>
<proteinExistence type="inferred from homology"/>
<feature type="chain" id="PRO_0000403045" description="FMN reductase (NADH) RutF">
    <location>
        <begin position="1"/>
        <end position="164"/>
    </location>
</feature>